<accession>Q5LIN8</accession>
<feature type="chain" id="PRO_1000067213" description="L-fucose isomerase">
    <location>
        <begin position="1"/>
        <end position="590"/>
    </location>
</feature>
<feature type="active site" description="Proton acceptor" evidence="1">
    <location>
        <position position="337"/>
    </location>
</feature>
<feature type="active site" description="Proton acceptor" evidence="1">
    <location>
        <position position="361"/>
    </location>
</feature>
<feature type="binding site" evidence="1">
    <location>
        <position position="337"/>
    </location>
    <ligand>
        <name>Mn(2+)</name>
        <dbReference type="ChEBI" id="CHEBI:29035"/>
    </ligand>
</feature>
<feature type="binding site" evidence="1">
    <location>
        <position position="361"/>
    </location>
    <ligand>
        <name>Mn(2+)</name>
        <dbReference type="ChEBI" id="CHEBI:29035"/>
    </ligand>
</feature>
<feature type="binding site" evidence="1">
    <location>
        <position position="528"/>
    </location>
    <ligand>
        <name>Mn(2+)</name>
        <dbReference type="ChEBI" id="CHEBI:29035"/>
    </ligand>
</feature>
<organism>
    <name type="scientific">Bacteroides fragilis (strain ATCC 25285 / DSM 2151 / CCUG 4856 / JCM 11019 / LMG 10263 / NCTC 9343 / Onslow / VPI 2553 / EN-2)</name>
    <dbReference type="NCBI Taxonomy" id="272559"/>
    <lineage>
        <taxon>Bacteria</taxon>
        <taxon>Pseudomonadati</taxon>
        <taxon>Bacteroidota</taxon>
        <taxon>Bacteroidia</taxon>
        <taxon>Bacteroidales</taxon>
        <taxon>Bacteroidaceae</taxon>
        <taxon>Bacteroides</taxon>
    </lineage>
</organism>
<reference key="1">
    <citation type="journal article" date="2005" name="Science">
        <title>Extensive DNA inversions in the B. fragilis genome control variable gene expression.</title>
        <authorList>
            <person name="Cerdeno-Tarraga A.-M."/>
            <person name="Patrick S."/>
            <person name="Crossman L.C."/>
            <person name="Blakely G."/>
            <person name="Abratt V."/>
            <person name="Lennard N."/>
            <person name="Poxton I."/>
            <person name="Duerden B."/>
            <person name="Harris B."/>
            <person name="Quail M.A."/>
            <person name="Barron A."/>
            <person name="Clark L."/>
            <person name="Corton C."/>
            <person name="Doggett J."/>
            <person name="Holden M.T.G."/>
            <person name="Larke N."/>
            <person name="Line A."/>
            <person name="Lord A."/>
            <person name="Norbertczak H."/>
            <person name="Ormond D."/>
            <person name="Price C."/>
            <person name="Rabbinowitsch E."/>
            <person name="Woodward J."/>
            <person name="Barrell B.G."/>
            <person name="Parkhill J."/>
        </authorList>
    </citation>
    <scope>NUCLEOTIDE SEQUENCE [LARGE SCALE GENOMIC DNA]</scope>
    <source>
        <strain>ATCC 25285 / DSM 2151 / CCUG 4856 / JCM 11019 / LMG 10263 / NCTC 9343 / Onslow / VPI 2553 / EN-2</strain>
    </source>
</reference>
<name>FUCI_BACFN</name>
<sequence length="590" mass="65371">MKKYPKIGIRPTIDGRQGGVRESLEEKTMNLAKAVAELITSNLKNGDGTPVECVIADGTIGRVAESAACAEKFEREGVGATITVTSCWCYGAETMDMNPYYPKAVWGFNGTERPGAVYLAAVLAGHAQKGLPAFGIYGRDVQDLNDNSIPADVAEKILRFARAAQAVATMRGKSYLSMGSVSMGIAGSIVNPDFFQEYLGMRNESIDLTEIIRRMAEGIYDKEEYAKAMAWTEKYCKKNEGNDFNIPEKTKTRAQKDEDWEFIVKMTIIMRDLMQGNPKLKELGFKEEALGHNAIAAGFQGQRQWTDFYPNGDFSEALLNTSFDWNGIREAFVVTTENDACNGVAMLFGHLLTNRAQIFSDVRTYWSPEAVKRVTGKELTGMAANGIIHLINSGATTLDGTGQQTNANGEPAMKPCWEITEGEVEKCLEATTWYPANRDYFRGGGFSSNFLSKGGMPVTMMRLNLIKGLGPVLQIAEGWTVEIDPEIHKLLDERTDRTWPTTWFVPRLCDKPAFKDVYSVMNNWGANHGAISYGHIGQDVITLASMLRIPVCMHNVEEDQIFRPAAWNAFGMDKEGADYRACTTYGPIYK</sequence>
<comment type="function">
    <text evidence="1">Converts the aldose L-fucose into the corresponding ketose L-fuculose.</text>
</comment>
<comment type="catalytic activity">
    <reaction evidence="1">
        <text>L-fucose = L-fuculose</text>
        <dbReference type="Rhea" id="RHEA:17233"/>
        <dbReference type="ChEBI" id="CHEBI:2181"/>
        <dbReference type="ChEBI" id="CHEBI:17617"/>
        <dbReference type="EC" id="5.3.1.25"/>
    </reaction>
</comment>
<comment type="cofactor">
    <cofactor evidence="1">
        <name>Mn(2+)</name>
        <dbReference type="ChEBI" id="CHEBI:29035"/>
    </cofactor>
</comment>
<comment type="pathway">
    <text evidence="1">Carbohydrate degradation; L-fucose degradation; L-lactaldehyde and glycerone phosphate from L-fucose: step 1/3.</text>
</comment>
<comment type="subcellular location">
    <subcellularLocation>
        <location evidence="1">Cytoplasm</location>
    </subcellularLocation>
</comment>
<comment type="similarity">
    <text evidence="1">Belongs to the L-fucose isomerase family.</text>
</comment>
<keyword id="KW-0119">Carbohydrate metabolism</keyword>
<keyword id="KW-0963">Cytoplasm</keyword>
<keyword id="KW-0294">Fucose metabolism</keyword>
<keyword id="KW-0413">Isomerase</keyword>
<keyword id="KW-0464">Manganese</keyword>
<keyword id="KW-0479">Metal-binding</keyword>
<protein>
    <recommendedName>
        <fullName evidence="1">L-fucose isomerase</fullName>
        <ecNumber evidence="1">5.3.1.25</ecNumber>
    </recommendedName>
    <alternativeName>
        <fullName evidence="1">6-deoxy-L-galactose isomerase</fullName>
    </alternativeName>
    <alternativeName>
        <fullName>FucIase</fullName>
    </alternativeName>
</protein>
<proteinExistence type="inferred from homology"/>
<gene>
    <name evidence="1" type="primary">fucI</name>
    <name type="ordered locus">BF0211</name>
</gene>
<evidence type="ECO:0000255" key="1">
    <source>
        <dbReference type="HAMAP-Rule" id="MF_01254"/>
    </source>
</evidence>
<dbReference type="EC" id="5.3.1.25" evidence="1"/>
<dbReference type="EMBL" id="CR626927">
    <property type="protein sequence ID" value="CAH05988.1"/>
    <property type="molecule type" value="Genomic_DNA"/>
</dbReference>
<dbReference type="RefSeq" id="WP_010991938.1">
    <property type="nucleotide sequence ID" value="NC_003228.3"/>
</dbReference>
<dbReference type="SMR" id="Q5LIN8"/>
<dbReference type="PaxDb" id="272559-BF9343_0209"/>
<dbReference type="GeneID" id="60367857"/>
<dbReference type="KEGG" id="bfs:BF9343_0209"/>
<dbReference type="eggNOG" id="COG2407">
    <property type="taxonomic scope" value="Bacteria"/>
</dbReference>
<dbReference type="HOGENOM" id="CLU_033326_1_0_10"/>
<dbReference type="UniPathway" id="UPA00563">
    <property type="reaction ID" value="UER00624"/>
</dbReference>
<dbReference type="Proteomes" id="UP000006731">
    <property type="component" value="Chromosome"/>
</dbReference>
<dbReference type="GO" id="GO:0005737">
    <property type="term" value="C:cytoplasm"/>
    <property type="evidence" value="ECO:0007669"/>
    <property type="project" value="UniProtKB-SubCell"/>
</dbReference>
<dbReference type="GO" id="GO:0008790">
    <property type="term" value="F:arabinose isomerase activity"/>
    <property type="evidence" value="ECO:0007669"/>
    <property type="project" value="TreeGrafter"/>
</dbReference>
<dbReference type="GO" id="GO:0008736">
    <property type="term" value="F:L-fucose isomerase activity"/>
    <property type="evidence" value="ECO:0007669"/>
    <property type="project" value="UniProtKB-UniRule"/>
</dbReference>
<dbReference type="GO" id="GO:0030145">
    <property type="term" value="F:manganese ion binding"/>
    <property type="evidence" value="ECO:0007669"/>
    <property type="project" value="UniProtKB-UniRule"/>
</dbReference>
<dbReference type="GO" id="GO:0019571">
    <property type="term" value="P:D-arabinose catabolic process"/>
    <property type="evidence" value="ECO:0007669"/>
    <property type="project" value="TreeGrafter"/>
</dbReference>
<dbReference type="GO" id="GO:0042355">
    <property type="term" value="P:L-fucose catabolic process"/>
    <property type="evidence" value="ECO:0007669"/>
    <property type="project" value="UniProtKB-UniRule"/>
</dbReference>
<dbReference type="CDD" id="cd03556">
    <property type="entry name" value="L-fucose_isomerase"/>
    <property type="match status" value="1"/>
</dbReference>
<dbReference type="FunFam" id="3.20.14.10:FF:000001">
    <property type="entry name" value="L-fucose isomerase"/>
    <property type="match status" value="1"/>
</dbReference>
<dbReference type="FunFam" id="3.40.275.10:FF:000001">
    <property type="entry name" value="L-fucose isomerase"/>
    <property type="match status" value="1"/>
</dbReference>
<dbReference type="FunFam" id="3.40.50.1070:FF:000001">
    <property type="entry name" value="L-fucose isomerase"/>
    <property type="match status" value="1"/>
</dbReference>
<dbReference type="Gene3D" id="3.40.50.1070">
    <property type="match status" value="1"/>
</dbReference>
<dbReference type="Gene3D" id="3.40.275.10">
    <property type="entry name" value="L-fucose Isomerase, Chain A, domain 2"/>
    <property type="match status" value="1"/>
</dbReference>
<dbReference type="Gene3D" id="3.20.14.10">
    <property type="entry name" value="L-fucose/L-arabinose isomerase, C-terminal"/>
    <property type="match status" value="1"/>
</dbReference>
<dbReference type="HAMAP" id="MF_01254">
    <property type="entry name" value="Fucose_iso"/>
    <property type="match status" value="1"/>
</dbReference>
<dbReference type="InterPro" id="IPR004216">
    <property type="entry name" value="Fuc/Ara_isomerase_C"/>
</dbReference>
<dbReference type="InterPro" id="IPR038393">
    <property type="entry name" value="Fuc_iso_dom3_sf"/>
</dbReference>
<dbReference type="InterPro" id="IPR015888">
    <property type="entry name" value="Fuc_isomerase_C"/>
</dbReference>
<dbReference type="InterPro" id="IPR038391">
    <property type="entry name" value="Fucose_iso_dom1_sf"/>
</dbReference>
<dbReference type="InterPro" id="IPR012888">
    <property type="entry name" value="Fucose_iso_N1"/>
</dbReference>
<dbReference type="InterPro" id="IPR005763">
    <property type="entry name" value="Fucose_isomerase"/>
</dbReference>
<dbReference type="InterPro" id="IPR038392">
    <property type="entry name" value="Fucose_isomerase_dom2_sf"/>
</dbReference>
<dbReference type="InterPro" id="IPR009015">
    <property type="entry name" value="Fucose_isomerase_N/cen_sf"/>
</dbReference>
<dbReference type="InterPro" id="IPR012889">
    <property type="entry name" value="Fucose_isomerase_N2"/>
</dbReference>
<dbReference type="NCBIfam" id="TIGR01089">
    <property type="entry name" value="fucI"/>
    <property type="match status" value="1"/>
</dbReference>
<dbReference type="NCBIfam" id="NF008220">
    <property type="entry name" value="PRK10991.1"/>
    <property type="match status" value="1"/>
</dbReference>
<dbReference type="PANTHER" id="PTHR37840">
    <property type="entry name" value="L-FUCOSE ISOMERASE"/>
    <property type="match status" value="1"/>
</dbReference>
<dbReference type="PANTHER" id="PTHR37840:SF1">
    <property type="entry name" value="L-FUCOSE ISOMERASE"/>
    <property type="match status" value="1"/>
</dbReference>
<dbReference type="Pfam" id="PF02952">
    <property type="entry name" value="Fucose_iso_C"/>
    <property type="match status" value="1"/>
</dbReference>
<dbReference type="Pfam" id="PF07881">
    <property type="entry name" value="Fucose_iso_N1"/>
    <property type="match status" value="1"/>
</dbReference>
<dbReference type="Pfam" id="PF07882">
    <property type="entry name" value="Fucose_iso_N2"/>
    <property type="match status" value="1"/>
</dbReference>
<dbReference type="SUPFAM" id="SSF50443">
    <property type="entry name" value="FucI/AraA C-terminal domain-like"/>
    <property type="match status" value="1"/>
</dbReference>
<dbReference type="SUPFAM" id="SSF53743">
    <property type="entry name" value="FucI/AraA N-terminal and middle domains"/>
    <property type="match status" value="1"/>
</dbReference>